<organism>
    <name type="scientific">Corynebacterium urealyticum (strain ATCC 43042 / DSM 7109)</name>
    <dbReference type="NCBI Taxonomy" id="504474"/>
    <lineage>
        <taxon>Bacteria</taxon>
        <taxon>Bacillati</taxon>
        <taxon>Actinomycetota</taxon>
        <taxon>Actinomycetes</taxon>
        <taxon>Mycobacteriales</taxon>
        <taxon>Corynebacteriaceae</taxon>
        <taxon>Corynebacterium</taxon>
    </lineage>
</organism>
<comment type="function">
    <text evidence="1">Catalyzes the oxidation of 3-carboxy-2-hydroxy-4-methylpentanoate (3-isopropylmalate) to 3-carboxy-4-methyl-2-oxopentanoate. The product decarboxylates to 4-methyl-2 oxopentanoate.</text>
</comment>
<comment type="catalytic activity">
    <reaction evidence="1">
        <text>(2R,3S)-3-isopropylmalate + NAD(+) = 4-methyl-2-oxopentanoate + CO2 + NADH</text>
        <dbReference type="Rhea" id="RHEA:32271"/>
        <dbReference type="ChEBI" id="CHEBI:16526"/>
        <dbReference type="ChEBI" id="CHEBI:17865"/>
        <dbReference type="ChEBI" id="CHEBI:35121"/>
        <dbReference type="ChEBI" id="CHEBI:57540"/>
        <dbReference type="ChEBI" id="CHEBI:57945"/>
        <dbReference type="EC" id="1.1.1.85"/>
    </reaction>
</comment>
<comment type="cofactor">
    <cofactor evidence="1">
        <name>Mg(2+)</name>
        <dbReference type="ChEBI" id="CHEBI:18420"/>
    </cofactor>
    <cofactor evidence="1">
        <name>Mn(2+)</name>
        <dbReference type="ChEBI" id="CHEBI:29035"/>
    </cofactor>
    <text evidence="1">Binds 1 Mg(2+) or Mn(2+) ion per subunit.</text>
</comment>
<comment type="pathway">
    <text evidence="1">Amino-acid biosynthesis; L-leucine biosynthesis; L-leucine from 3-methyl-2-oxobutanoate: step 3/4.</text>
</comment>
<comment type="subunit">
    <text evidence="1">Homodimer.</text>
</comment>
<comment type="subcellular location">
    <subcellularLocation>
        <location evidence="1">Cytoplasm</location>
    </subcellularLocation>
</comment>
<comment type="similarity">
    <text evidence="1">Belongs to the isocitrate and isopropylmalate dehydrogenases family. LeuB type 2 subfamily.</text>
</comment>
<evidence type="ECO:0000255" key="1">
    <source>
        <dbReference type="HAMAP-Rule" id="MF_01035"/>
    </source>
</evidence>
<feature type="chain" id="PRO_1000135855" description="3-isopropylmalate dehydrogenase">
    <location>
        <begin position="1"/>
        <end position="339"/>
    </location>
</feature>
<feature type="binding site" evidence="1">
    <location>
        <position position="88"/>
    </location>
    <ligand>
        <name>substrate</name>
    </ligand>
</feature>
<feature type="binding site" evidence="1">
    <location>
        <position position="98"/>
    </location>
    <ligand>
        <name>substrate</name>
    </ligand>
</feature>
<feature type="binding site" evidence="1">
    <location>
        <position position="122"/>
    </location>
    <ligand>
        <name>substrate</name>
    </ligand>
</feature>
<feature type="binding site" evidence="1">
    <location>
        <position position="212"/>
    </location>
    <ligand>
        <name>Mg(2+)</name>
        <dbReference type="ChEBI" id="CHEBI:18420"/>
    </ligand>
</feature>
<feature type="binding site" evidence="1">
    <location>
        <position position="212"/>
    </location>
    <ligand>
        <name>substrate</name>
    </ligand>
</feature>
<feature type="binding site" evidence="1">
    <location>
        <position position="236"/>
    </location>
    <ligand>
        <name>Mg(2+)</name>
        <dbReference type="ChEBI" id="CHEBI:18420"/>
    </ligand>
</feature>
<feature type="binding site" evidence="1">
    <location>
        <position position="240"/>
    </location>
    <ligand>
        <name>Mg(2+)</name>
        <dbReference type="ChEBI" id="CHEBI:18420"/>
    </ligand>
</feature>
<feature type="binding site" evidence="1">
    <location>
        <begin position="272"/>
        <end position="284"/>
    </location>
    <ligand>
        <name>NAD(+)</name>
        <dbReference type="ChEBI" id="CHEBI:57540"/>
    </ligand>
</feature>
<feature type="site" description="Important for catalysis" evidence="1">
    <location>
        <position position="129"/>
    </location>
</feature>
<feature type="site" description="Important for catalysis" evidence="1">
    <location>
        <position position="179"/>
    </location>
</feature>
<name>LEU3_CORU7</name>
<sequence>MKLAVIDGDGIGVEVTAEALKVLKAVRDDVETTEYDLGARRYLRNGETLTDADLESLKQHDAILLGAIGDPRTVPAGVLERGLLLPLRFKLDHAVNLRPSKLYPGASSPLKNAGEIDFVVVREGTEGLYCGNGGTLREGTDHEVASEVSQNTWFGVERVVRDAFRRAQERRKKLTWVHKTNVLVNAGGLWQRAIETIGKEFPDVEVDYNHIDAATIYMVTDPSRYDVIVTDNLFGDILTDLAGAVTGGIGLAASGNIDPTHNNPSMFEPVHGSAPDIAGQGIADPCAAILSVALMLRHLGDEANAEKIEKAVLDEAAGRDGSPIRTTEVGDRIAAAVQA</sequence>
<dbReference type="EC" id="1.1.1.85" evidence="1"/>
<dbReference type="EMBL" id="AM942444">
    <property type="protein sequence ID" value="CAQ04724.1"/>
    <property type="molecule type" value="Genomic_DNA"/>
</dbReference>
<dbReference type="RefSeq" id="WP_012360013.1">
    <property type="nucleotide sequence ID" value="NC_010545.1"/>
</dbReference>
<dbReference type="SMR" id="B1VG35"/>
<dbReference type="STRING" id="504474.cu0764"/>
<dbReference type="GeneID" id="60603539"/>
<dbReference type="KEGG" id="cur:cu0764"/>
<dbReference type="eggNOG" id="COG0473">
    <property type="taxonomic scope" value="Bacteria"/>
</dbReference>
<dbReference type="HOGENOM" id="CLU_031953_0_1_11"/>
<dbReference type="UniPathway" id="UPA00048">
    <property type="reaction ID" value="UER00072"/>
</dbReference>
<dbReference type="Proteomes" id="UP000001727">
    <property type="component" value="Chromosome"/>
</dbReference>
<dbReference type="GO" id="GO:0005737">
    <property type="term" value="C:cytoplasm"/>
    <property type="evidence" value="ECO:0007669"/>
    <property type="project" value="UniProtKB-SubCell"/>
</dbReference>
<dbReference type="GO" id="GO:0003862">
    <property type="term" value="F:3-isopropylmalate dehydrogenase activity"/>
    <property type="evidence" value="ECO:0007669"/>
    <property type="project" value="UniProtKB-UniRule"/>
</dbReference>
<dbReference type="GO" id="GO:0000287">
    <property type="term" value="F:magnesium ion binding"/>
    <property type="evidence" value="ECO:0007669"/>
    <property type="project" value="InterPro"/>
</dbReference>
<dbReference type="GO" id="GO:0051287">
    <property type="term" value="F:NAD binding"/>
    <property type="evidence" value="ECO:0007669"/>
    <property type="project" value="InterPro"/>
</dbReference>
<dbReference type="GO" id="GO:0009098">
    <property type="term" value="P:L-leucine biosynthetic process"/>
    <property type="evidence" value="ECO:0007669"/>
    <property type="project" value="UniProtKB-UniRule"/>
</dbReference>
<dbReference type="Gene3D" id="3.40.718.10">
    <property type="entry name" value="Isopropylmalate Dehydrogenase"/>
    <property type="match status" value="1"/>
</dbReference>
<dbReference type="HAMAP" id="MF_01035">
    <property type="entry name" value="LeuB_type2"/>
    <property type="match status" value="1"/>
</dbReference>
<dbReference type="InterPro" id="IPR050501">
    <property type="entry name" value="ICDH/IPMDH"/>
</dbReference>
<dbReference type="InterPro" id="IPR019818">
    <property type="entry name" value="IsoCit/isopropylmalate_DH_CS"/>
</dbReference>
<dbReference type="InterPro" id="IPR024084">
    <property type="entry name" value="IsoPropMal-DH-like_dom"/>
</dbReference>
<dbReference type="InterPro" id="IPR023698">
    <property type="entry name" value="LeuB_actb"/>
</dbReference>
<dbReference type="NCBIfam" id="NF002898">
    <property type="entry name" value="PRK03437.1"/>
    <property type="match status" value="1"/>
</dbReference>
<dbReference type="PANTHER" id="PTHR43275">
    <property type="entry name" value="D-MALATE DEHYDROGENASE [DECARBOXYLATING]"/>
    <property type="match status" value="1"/>
</dbReference>
<dbReference type="PANTHER" id="PTHR43275:SF1">
    <property type="entry name" value="D-MALATE DEHYDROGENASE [DECARBOXYLATING]"/>
    <property type="match status" value="1"/>
</dbReference>
<dbReference type="Pfam" id="PF00180">
    <property type="entry name" value="Iso_dh"/>
    <property type="match status" value="1"/>
</dbReference>
<dbReference type="SMART" id="SM01329">
    <property type="entry name" value="Iso_dh"/>
    <property type="match status" value="1"/>
</dbReference>
<dbReference type="SUPFAM" id="SSF53659">
    <property type="entry name" value="Isocitrate/Isopropylmalate dehydrogenase-like"/>
    <property type="match status" value="1"/>
</dbReference>
<dbReference type="PROSITE" id="PS00470">
    <property type="entry name" value="IDH_IMDH"/>
    <property type="match status" value="1"/>
</dbReference>
<protein>
    <recommendedName>
        <fullName evidence="1">3-isopropylmalate dehydrogenase</fullName>
        <ecNumber evidence="1">1.1.1.85</ecNumber>
    </recommendedName>
    <alternativeName>
        <fullName evidence="1">3-IPM-DH</fullName>
    </alternativeName>
    <alternativeName>
        <fullName evidence="1">Beta-IPM dehydrogenase</fullName>
        <shortName evidence="1">IMDH</shortName>
    </alternativeName>
</protein>
<accession>B1VG35</accession>
<reference key="1">
    <citation type="journal article" date="2008" name="J. Biotechnol.">
        <title>The lifestyle of Corynebacterium urealyticum derived from its complete genome sequence established by pyrosequencing.</title>
        <authorList>
            <person name="Tauch A."/>
            <person name="Trost E."/>
            <person name="Tilker A."/>
            <person name="Ludewig U."/>
            <person name="Schneiker S."/>
            <person name="Goesmann A."/>
            <person name="Arnold W."/>
            <person name="Bekel T."/>
            <person name="Brinkrolf K."/>
            <person name="Brune I."/>
            <person name="Goetker S."/>
            <person name="Kalinowski J."/>
            <person name="Kamp P.-B."/>
            <person name="Lobo F.P."/>
            <person name="Viehoever P."/>
            <person name="Weisshaar B."/>
            <person name="Soriano F."/>
            <person name="Droege M."/>
            <person name="Puehler A."/>
        </authorList>
    </citation>
    <scope>NUCLEOTIDE SEQUENCE [LARGE SCALE GENOMIC DNA]</scope>
    <source>
        <strain>ATCC 43042 / DSM 7109</strain>
    </source>
</reference>
<keyword id="KW-0028">Amino-acid biosynthesis</keyword>
<keyword id="KW-0100">Branched-chain amino acid biosynthesis</keyword>
<keyword id="KW-0963">Cytoplasm</keyword>
<keyword id="KW-0432">Leucine biosynthesis</keyword>
<keyword id="KW-0460">Magnesium</keyword>
<keyword id="KW-0464">Manganese</keyword>
<keyword id="KW-0479">Metal-binding</keyword>
<keyword id="KW-0520">NAD</keyword>
<keyword id="KW-0560">Oxidoreductase</keyword>
<keyword id="KW-1185">Reference proteome</keyword>
<gene>
    <name evidence="1" type="primary">leuB</name>
    <name type="ordered locus">cu0764</name>
</gene>
<proteinExistence type="inferred from homology"/>